<feature type="chain" id="PRO_0000108600" description="Ribosomal RNA small subunit methyltransferase H">
    <location>
        <begin position="1"/>
        <end position="321"/>
    </location>
</feature>
<feature type="binding site" evidence="1">
    <location>
        <begin position="34"/>
        <end position="36"/>
    </location>
    <ligand>
        <name>S-adenosyl-L-methionine</name>
        <dbReference type="ChEBI" id="CHEBI:59789"/>
    </ligand>
</feature>
<feature type="binding site" evidence="1">
    <location>
        <position position="54"/>
    </location>
    <ligand>
        <name>S-adenosyl-L-methionine</name>
        <dbReference type="ChEBI" id="CHEBI:59789"/>
    </ligand>
</feature>
<feature type="binding site" evidence="1">
    <location>
        <position position="80"/>
    </location>
    <ligand>
        <name>S-adenosyl-L-methionine</name>
        <dbReference type="ChEBI" id="CHEBI:59789"/>
    </ligand>
</feature>
<feature type="binding site" evidence="1">
    <location>
        <position position="102"/>
    </location>
    <ligand>
        <name>S-adenosyl-L-methionine</name>
        <dbReference type="ChEBI" id="CHEBI:59789"/>
    </ligand>
</feature>
<feature type="binding site" evidence="1">
    <location>
        <position position="109"/>
    </location>
    <ligand>
        <name>S-adenosyl-L-methionine</name>
        <dbReference type="ChEBI" id="CHEBI:59789"/>
    </ligand>
</feature>
<gene>
    <name evidence="1" type="primary">rsmH</name>
    <name type="synonym">mraW</name>
    <name type="ordered locus">Bfl134</name>
</gene>
<proteinExistence type="inferred from homology"/>
<reference key="1">
    <citation type="journal article" date="2003" name="Proc. Natl. Acad. Sci. U.S.A.">
        <title>The genome sequence of Blochmannia floridanus: comparative analysis of reduced genomes.</title>
        <authorList>
            <person name="Gil R."/>
            <person name="Silva F.J."/>
            <person name="Zientz E."/>
            <person name="Delmotte F."/>
            <person name="Gonzalez-Candelas F."/>
            <person name="Latorre A."/>
            <person name="Rausell C."/>
            <person name="Kamerbeek J."/>
            <person name="Gadau J."/>
            <person name="Hoelldobler B."/>
            <person name="van Ham R.C.H.J."/>
            <person name="Gross R."/>
            <person name="Moya A."/>
        </authorList>
    </citation>
    <scope>NUCLEOTIDE SEQUENCE [LARGE SCALE GENOMIC DNA]</scope>
</reference>
<comment type="function">
    <text evidence="1">Specifically methylates the N4 position of cytidine in position 1402 (C1402) of 16S rRNA.</text>
</comment>
<comment type="catalytic activity">
    <reaction evidence="1">
        <text>cytidine(1402) in 16S rRNA + S-adenosyl-L-methionine = N(4)-methylcytidine(1402) in 16S rRNA + S-adenosyl-L-homocysteine + H(+)</text>
        <dbReference type="Rhea" id="RHEA:42928"/>
        <dbReference type="Rhea" id="RHEA-COMP:10286"/>
        <dbReference type="Rhea" id="RHEA-COMP:10287"/>
        <dbReference type="ChEBI" id="CHEBI:15378"/>
        <dbReference type="ChEBI" id="CHEBI:57856"/>
        <dbReference type="ChEBI" id="CHEBI:59789"/>
        <dbReference type="ChEBI" id="CHEBI:74506"/>
        <dbReference type="ChEBI" id="CHEBI:82748"/>
        <dbReference type="EC" id="2.1.1.199"/>
    </reaction>
</comment>
<comment type="subcellular location">
    <subcellularLocation>
        <location evidence="1">Cytoplasm</location>
    </subcellularLocation>
</comment>
<comment type="similarity">
    <text evidence="1">Belongs to the methyltransferase superfamily. RsmH family.</text>
</comment>
<protein>
    <recommendedName>
        <fullName evidence="1">Ribosomal RNA small subunit methyltransferase H</fullName>
        <ecNumber evidence="1">2.1.1.199</ecNumber>
    </recommendedName>
    <alternativeName>
        <fullName evidence="1">16S rRNA m(4)C1402 methyltransferase</fullName>
    </alternativeName>
    <alternativeName>
        <fullName evidence="1">rRNA (cytosine-N(4)-)-methyltransferase RsmH</fullName>
    </alternativeName>
</protein>
<evidence type="ECO:0000255" key="1">
    <source>
        <dbReference type="HAMAP-Rule" id="MF_01007"/>
    </source>
</evidence>
<keyword id="KW-0963">Cytoplasm</keyword>
<keyword id="KW-0489">Methyltransferase</keyword>
<keyword id="KW-1185">Reference proteome</keyword>
<keyword id="KW-0698">rRNA processing</keyword>
<keyword id="KW-0949">S-adenosyl-L-methionine</keyword>
<keyword id="KW-0808">Transferase</keyword>
<name>RSMH_BLOFL</name>
<dbReference type="EC" id="2.1.1.199" evidence="1"/>
<dbReference type="EMBL" id="BX248583">
    <property type="protein sequence ID" value="CAD83655.1"/>
    <property type="molecule type" value="Genomic_DNA"/>
</dbReference>
<dbReference type="SMR" id="Q7VQJ5"/>
<dbReference type="STRING" id="203907.Bfl134"/>
<dbReference type="KEGG" id="bfl:Bfl134"/>
<dbReference type="eggNOG" id="COG0275">
    <property type="taxonomic scope" value="Bacteria"/>
</dbReference>
<dbReference type="HOGENOM" id="CLU_038422_2_0_6"/>
<dbReference type="OrthoDB" id="9806637at2"/>
<dbReference type="Proteomes" id="UP000002192">
    <property type="component" value="Chromosome"/>
</dbReference>
<dbReference type="GO" id="GO:0005737">
    <property type="term" value="C:cytoplasm"/>
    <property type="evidence" value="ECO:0007669"/>
    <property type="project" value="UniProtKB-SubCell"/>
</dbReference>
<dbReference type="GO" id="GO:0071424">
    <property type="term" value="F:rRNA (cytosine-N4-)-methyltransferase activity"/>
    <property type="evidence" value="ECO:0007669"/>
    <property type="project" value="UniProtKB-UniRule"/>
</dbReference>
<dbReference type="GO" id="GO:0070475">
    <property type="term" value="P:rRNA base methylation"/>
    <property type="evidence" value="ECO:0007669"/>
    <property type="project" value="UniProtKB-UniRule"/>
</dbReference>
<dbReference type="Gene3D" id="1.10.150.170">
    <property type="entry name" value="Putative methyltransferase TM0872, insert domain"/>
    <property type="match status" value="1"/>
</dbReference>
<dbReference type="Gene3D" id="3.40.50.150">
    <property type="entry name" value="Vaccinia Virus protein VP39"/>
    <property type="match status" value="1"/>
</dbReference>
<dbReference type="HAMAP" id="MF_01007">
    <property type="entry name" value="16SrRNA_methyltr_H"/>
    <property type="match status" value="1"/>
</dbReference>
<dbReference type="InterPro" id="IPR002903">
    <property type="entry name" value="RsmH"/>
</dbReference>
<dbReference type="InterPro" id="IPR023397">
    <property type="entry name" value="SAM-dep_MeTrfase_MraW_recog"/>
</dbReference>
<dbReference type="InterPro" id="IPR029063">
    <property type="entry name" value="SAM-dependent_MTases_sf"/>
</dbReference>
<dbReference type="NCBIfam" id="TIGR00006">
    <property type="entry name" value="16S rRNA (cytosine(1402)-N(4))-methyltransferase RsmH"/>
    <property type="match status" value="1"/>
</dbReference>
<dbReference type="PANTHER" id="PTHR11265:SF0">
    <property type="entry name" value="12S RRNA N4-METHYLCYTIDINE METHYLTRANSFERASE"/>
    <property type="match status" value="1"/>
</dbReference>
<dbReference type="PANTHER" id="PTHR11265">
    <property type="entry name" value="S-ADENOSYL-METHYLTRANSFERASE MRAW"/>
    <property type="match status" value="1"/>
</dbReference>
<dbReference type="Pfam" id="PF01795">
    <property type="entry name" value="Methyltransf_5"/>
    <property type="match status" value="1"/>
</dbReference>
<dbReference type="PIRSF" id="PIRSF004486">
    <property type="entry name" value="MraW"/>
    <property type="match status" value="1"/>
</dbReference>
<dbReference type="SUPFAM" id="SSF81799">
    <property type="entry name" value="Putative methyltransferase TM0872, insert domain"/>
    <property type="match status" value="1"/>
</dbReference>
<dbReference type="SUPFAM" id="SSF53335">
    <property type="entry name" value="S-adenosyl-L-methionine-dependent methyltransferases"/>
    <property type="match status" value="1"/>
</dbReference>
<accession>Q7VQJ5</accession>
<sequence>MFIMHHNSVLLHEAINALNINPSGIYIDGTFGLGGHSHYILSKLTSHGRLIAMDRDWSAVNIGEVLTKQDGRFSIIHAPFSKMLRCIYNMNLVGLINGILLDLGVCESQLTDSSRGFSFMRDGPLDMRMDNSVGQSAYEWIAKASQKDIEWVLRTFGEEKLSKKIARSIVLKREVYPIDRTSALSEIISDTVLYYNNRYNRRKHPATRSFLAIRIYINEELVEIMKILQDVFKLLAPGGRLVVISFNSLEDRIVKKFINQYSRVFAYPPKIPLTHTQLLHKYSGTMKFKNLGKIKPTVLEIKKNIRARSAILRYAEKLIYM</sequence>
<organism>
    <name type="scientific">Blochmanniella floridana</name>
    <dbReference type="NCBI Taxonomy" id="203907"/>
    <lineage>
        <taxon>Bacteria</taxon>
        <taxon>Pseudomonadati</taxon>
        <taxon>Pseudomonadota</taxon>
        <taxon>Gammaproteobacteria</taxon>
        <taxon>Enterobacterales</taxon>
        <taxon>Enterobacteriaceae</taxon>
        <taxon>ant endosymbionts</taxon>
        <taxon>Candidatus Blochmanniella</taxon>
    </lineage>
</organism>